<dbReference type="EC" id="4.1.1.65" evidence="1"/>
<dbReference type="EMBL" id="CP000305">
    <property type="protein sequence ID" value="ABG19634.1"/>
    <property type="molecule type" value="Genomic_DNA"/>
</dbReference>
<dbReference type="EMBL" id="ACNQ01000017">
    <property type="protein sequence ID" value="EEO75821.1"/>
    <property type="molecule type" value="Genomic_DNA"/>
</dbReference>
<dbReference type="SMR" id="Q1CEE6"/>
<dbReference type="KEGG" id="ypn:YPN_3307"/>
<dbReference type="HOGENOM" id="CLU_029061_4_1_6"/>
<dbReference type="UniPathway" id="UPA00558">
    <property type="reaction ID" value="UER00616"/>
</dbReference>
<dbReference type="Proteomes" id="UP000008936">
    <property type="component" value="Chromosome"/>
</dbReference>
<dbReference type="GO" id="GO:0005886">
    <property type="term" value="C:plasma membrane"/>
    <property type="evidence" value="ECO:0007669"/>
    <property type="project" value="UniProtKB-SubCell"/>
</dbReference>
<dbReference type="GO" id="GO:0004609">
    <property type="term" value="F:phosphatidylserine decarboxylase activity"/>
    <property type="evidence" value="ECO:0007669"/>
    <property type="project" value="UniProtKB-UniRule"/>
</dbReference>
<dbReference type="GO" id="GO:0006646">
    <property type="term" value="P:phosphatidylethanolamine biosynthetic process"/>
    <property type="evidence" value="ECO:0007669"/>
    <property type="project" value="UniProtKB-UniRule"/>
</dbReference>
<dbReference type="HAMAP" id="MF_00662">
    <property type="entry name" value="PS_decarb_PSD_B_type1"/>
    <property type="match status" value="1"/>
</dbReference>
<dbReference type="InterPro" id="IPR003817">
    <property type="entry name" value="PS_Dcarbxylase"/>
</dbReference>
<dbReference type="InterPro" id="IPR033177">
    <property type="entry name" value="PSD-B"/>
</dbReference>
<dbReference type="InterPro" id="IPR033178">
    <property type="entry name" value="PSD_type1_pro"/>
</dbReference>
<dbReference type="NCBIfam" id="TIGR00163">
    <property type="entry name" value="PS_decarb"/>
    <property type="match status" value="1"/>
</dbReference>
<dbReference type="PANTHER" id="PTHR10067">
    <property type="entry name" value="PHOSPHATIDYLSERINE DECARBOXYLASE"/>
    <property type="match status" value="1"/>
</dbReference>
<dbReference type="PANTHER" id="PTHR10067:SF6">
    <property type="entry name" value="PHOSPHATIDYLSERINE DECARBOXYLASE PROENZYME, MITOCHONDRIAL"/>
    <property type="match status" value="1"/>
</dbReference>
<dbReference type="Pfam" id="PF02666">
    <property type="entry name" value="PS_Dcarbxylase"/>
    <property type="match status" value="1"/>
</dbReference>
<protein>
    <recommendedName>
        <fullName evidence="1">Phosphatidylserine decarboxylase proenzyme</fullName>
        <ecNumber evidence="1">4.1.1.65</ecNumber>
    </recommendedName>
    <component>
        <recommendedName>
            <fullName evidence="1">Phosphatidylserine decarboxylase alpha chain</fullName>
        </recommendedName>
    </component>
    <component>
        <recommendedName>
            <fullName evidence="1">Phosphatidylserine decarboxylase beta chain</fullName>
        </recommendedName>
    </component>
</protein>
<name>PSD_YERPN</name>
<reference key="1">
    <citation type="journal article" date="2006" name="J. Bacteriol.">
        <title>Complete genome sequence of Yersinia pestis strains Antiqua and Nepal516: evidence of gene reduction in an emerging pathogen.</title>
        <authorList>
            <person name="Chain P.S.G."/>
            <person name="Hu P."/>
            <person name="Malfatti S.A."/>
            <person name="Radnedge L."/>
            <person name="Larimer F."/>
            <person name="Vergez L.M."/>
            <person name="Worsham P."/>
            <person name="Chu M.C."/>
            <person name="Andersen G.L."/>
        </authorList>
    </citation>
    <scope>NUCLEOTIDE SEQUENCE [LARGE SCALE GENOMIC DNA]</scope>
    <source>
        <strain>Nepal516</strain>
    </source>
</reference>
<reference key="2">
    <citation type="submission" date="2009-04" db="EMBL/GenBank/DDBJ databases">
        <title>Yersinia pestis Nepal516A whole genome shotgun sequencing project.</title>
        <authorList>
            <person name="Plunkett G. III"/>
            <person name="Anderson B.D."/>
            <person name="Baumler D.J."/>
            <person name="Burland V."/>
            <person name="Cabot E.L."/>
            <person name="Glasner J.D."/>
            <person name="Mau B."/>
            <person name="Neeno-Eckwall E."/>
            <person name="Perna N.T."/>
            <person name="Munk A.C."/>
            <person name="Tapia R."/>
            <person name="Green L.D."/>
            <person name="Rogers Y.C."/>
            <person name="Detter J.C."/>
            <person name="Bruce D.C."/>
            <person name="Brettin T.S."/>
        </authorList>
    </citation>
    <scope>NUCLEOTIDE SEQUENCE [LARGE SCALE GENOMIC DNA]</scope>
    <source>
        <strain>Nepal516</strain>
    </source>
</reference>
<feature type="chain" id="PRO_0000262175" description="Phosphatidylserine decarboxylase beta chain" evidence="1">
    <location>
        <begin position="1"/>
        <end position="253"/>
    </location>
</feature>
<feature type="chain" id="PRO_0000262176" description="Phosphatidylserine decarboxylase alpha chain" evidence="1">
    <location>
        <begin position="254"/>
        <end position="293"/>
    </location>
</feature>
<feature type="active site" description="Charge relay system; for autoendoproteolytic cleavage activity" evidence="1">
    <location>
        <position position="90"/>
    </location>
</feature>
<feature type="active site" description="Charge relay system; for autoendoproteolytic cleavage activity" evidence="1">
    <location>
        <position position="147"/>
    </location>
</feature>
<feature type="active site" description="Charge relay system; for autoendoproteolytic cleavage activity" evidence="1">
    <location>
        <position position="254"/>
    </location>
</feature>
<feature type="active site" description="Schiff-base intermediate with substrate; via pyruvic acid; for decarboxylase activity" evidence="1">
    <location>
        <position position="254"/>
    </location>
</feature>
<feature type="site" description="Cleavage (non-hydrolytic); by autocatalysis" evidence="1">
    <location>
        <begin position="253"/>
        <end position="254"/>
    </location>
</feature>
<feature type="modified residue" description="Pyruvic acid (Ser); by autocatalysis" evidence="1">
    <location>
        <position position="254"/>
    </location>
</feature>
<sequence length="293" mass="32235">MLDSIKIKLQYLLPKQGLTQLAGWGANKQGGWLTQLVIKAFARYYKVDMKEAQDPEFSAYRTFNEFFVRPLRAGVRPVVAEENLLAQPADGAISQLGAIREGQILQAKGHNYSLEALLAGNYLLAAEFQNGQFVTTYLAPRDYHRVHMPCDGVLREMIYVPGDLFSVNPLTAANVPNLFARNERVICIFDTAFGPMAQILVGATIVGSIETVWAGTITPPREGVIRRWTYPQAGCEGAITLEKGQEMGRFKLGSTVINLFAEGKVYFAPQLNSGAVTRMGEVLAEAVPTTPSY</sequence>
<comment type="function">
    <text evidence="1">Catalyzes the formation of phosphatidylethanolamine (PtdEtn) from phosphatidylserine (PtdSer).</text>
</comment>
<comment type="catalytic activity">
    <reaction evidence="1">
        <text>a 1,2-diacyl-sn-glycero-3-phospho-L-serine + H(+) = a 1,2-diacyl-sn-glycero-3-phosphoethanolamine + CO2</text>
        <dbReference type="Rhea" id="RHEA:20828"/>
        <dbReference type="ChEBI" id="CHEBI:15378"/>
        <dbReference type="ChEBI" id="CHEBI:16526"/>
        <dbReference type="ChEBI" id="CHEBI:57262"/>
        <dbReference type="ChEBI" id="CHEBI:64612"/>
        <dbReference type="EC" id="4.1.1.65"/>
    </reaction>
</comment>
<comment type="cofactor">
    <cofactor evidence="1">
        <name>pyruvate</name>
        <dbReference type="ChEBI" id="CHEBI:15361"/>
    </cofactor>
    <text evidence="1">Binds 1 pyruvoyl group covalently per subunit.</text>
</comment>
<comment type="pathway">
    <text evidence="1">Phospholipid metabolism; phosphatidylethanolamine biosynthesis; phosphatidylethanolamine from CDP-diacylglycerol: step 2/2.</text>
</comment>
<comment type="subunit">
    <text evidence="1">Heterodimer of a large membrane-associated beta subunit and a small pyruvoyl-containing alpha subunit.</text>
</comment>
<comment type="subcellular location">
    <subcellularLocation>
        <location evidence="1">Cell membrane</location>
        <topology evidence="1">Peripheral membrane protein</topology>
    </subcellularLocation>
</comment>
<comment type="PTM">
    <text evidence="1">Is synthesized initially as an inactive proenzyme. Formation of the active enzyme involves a self-maturation process in which the active site pyruvoyl group is generated from an internal serine residue via an autocatalytic post-translational modification. Two non-identical subunits are generated from the proenzyme in this reaction, and the pyruvate is formed at the N-terminus of the alpha chain, which is derived from the carboxyl end of the proenzyme. The autoendoproteolytic cleavage occurs by a canonical serine protease mechanism, in which the side chain hydroxyl group of the serine supplies its oxygen atom to form the C-terminus of the beta chain, while the remainder of the serine residue undergoes an oxidative deamination to produce ammonia and the pyruvoyl prosthetic group on the alpha chain. During this reaction, the Ser that is part of the protease active site of the proenzyme becomes the pyruvoyl prosthetic group, which constitutes an essential element of the active site of the mature decarboxylase.</text>
</comment>
<comment type="similarity">
    <text evidence="1">Belongs to the phosphatidylserine decarboxylase family. PSD-B subfamily. Prokaryotic type I sub-subfamily.</text>
</comment>
<accession>Q1CEE6</accession>
<accession>C4GY21</accession>
<proteinExistence type="inferred from homology"/>
<organism>
    <name type="scientific">Yersinia pestis bv. Antiqua (strain Nepal516)</name>
    <dbReference type="NCBI Taxonomy" id="377628"/>
    <lineage>
        <taxon>Bacteria</taxon>
        <taxon>Pseudomonadati</taxon>
        <taxon>Pseudomonadota</taxon>
        <taxon>Gammaproteobacteria</taxon>
        <taxon>Enterobacterales</taxon>
        <taxon>Yersiniaceae</taxon>
        <taxon>Yersinia</taxon>
    </lineage>
</organism>
<evidence type="ECO:0000255" key="1">
    <source>
        <dbReference type="HAMAP-Rule" id="MF_00662"/>
    </source>
</evidence>
<keyword id="KW-1003">Cell membrane</keyword>
<keyword id="KW-0210">Decarboxylase</keyword>
<keyword id="KW-0444">Lipid biosynthesis</keyword>
<keyword id="KW-0443">Lipid metabolism</keyword>
<keyword id="KW-0456">Lyase</keyword>
<keyword id="KW-0472">Membrane</keyword>
<keyword id="KW-0594">Phospholipid biosynthesis</keyword>
<keyword id="KW-1208">Phospholipid metabolism</keyword>
<keyword id="KW-0670">Pyruvate</keyword>
<keyword id="KW-0865">Zymogen</keyword>
<gene>
    <name evidence="1" type="primary">psd</name>
    <name type="ordered locus">YPN_3307</name>
    <name type="ORF">YP516_3759</name>
</gene>